<reference key="1">
    <citation type="journal article" date="2009" name="BMC Genomics">
        <title>Pseudogene accumulation in the evolutionary histories of Salmonella enterica serovars Paratyphi A and Typhi.</title>
        <authorList>
            <person name="Holt K.E."/>
            <person name="Thomson N.R."/>
            <person name="Wain J."/>
            <person name="Langridge G.C."/>
            <person name="Hasan R."/>
            <person name="Bhutta Z.A."/>
            <person name="Quail M.A."/>
            <person name="Norbertczak H."/>
            <person name="Walker D."/>
            <person name="Simmonds M."/>
            <person name="White B."/>
            <person name="Bason N."/>
            <person name="Mungall K."/>
            <person name="Dougan G."/>
            <person name="Parkhill J."/>
        </authorList>
    </citation>
    <scope>NUCLEOTIDE SEQUENCE [LARGE SCALE GENOMIC DNA]</scope>
    <source>
        <strain>AKU_12601</strain>
    </source>
</reference>
<keyword id="KW-0050">Antiport</keyword>
<keyword id="KW-0997">Cell inner membrane</keyword>
<keyword id="KW-1003">Cell membrane</keyword>
<keyword id="KW-0406">Ion transport</keyword>
<keyword id="KW-0472">Membrane</keyword>
<keyword id="KW-0630">Potassium</keyword>
<keyword id="KW-0633">Potassium transport</keyword>
<keyword id="KW-0812">Transmembrane</keyword>
<keyword id="KW-1133">Transmembrane helix</keyword>
<keyword id="KW-0813">Transport</keyword>
<name>KEFB_SALPK</name>
<protein>
    <recommendedName>
        <fullName evidence="1">Glutathione-regulated potassium-efflux system protein KefB</fullName>
    </recommendedName>
    <alternativeName>
        <fullName evidence="1">K(+)/H(+) antiporter</fullName>
    </alternativeName>
</protein>
<gene>
    <name evidence="1" type="primary">kefB</name>
    <name type="ordered locus">SSPA3102</name>
</gene>
<comment type="function">
    <text evidence="1">Pore-forming subunit of a potassium efflux system that confers protection against electrophiles. Catalyzes K(+)/H(+) antiport.</text>
</comment>
<comment type="subunit">
    <text evidence="1">Interacts with the regulatory subunit KefG.</text>
</comment>
<comment type="subcellular location">
    <subcellularLocation>
        <location evidence="1">Cell inner membrane</location>
        <topology evidence="1">Multi-pass membrane protein</topology>
    </subcellularLocation>
</comment>
<comment type="similarity">
    <text evidence="1">Belongs to the monovalent cation:proton antiporter 2 (CPA2) transporter (TC 2.A.37) family. KefB subfamily.</text>
</comment>
<accession>B5BH03</accession>
<evidence type="ECO:0000255" key="1">
    <source>
        <dbReference type="HAMAP-Rule" id="MF_01412"/>
    </source>
</evidence>
<evidence type="ECO:0000255" key="2">
    <source>
        <dbReference type="PROSITE-ProRule" id="PRU00543"/>
    </source>
</evidence>
<feature type="chain" id="PRO_1000145530" description="Glutathione-regulated potassium-efflux system protein KefB">
    <location>
        <begin position="1"/>
        <end position="601"/>
    </location>
</feature>
<feature type="transmembrane region" description="Helical" evidence="1">
    <location>
        <begin position="4"/>
        <end position="24"/>
    </location>
</feature>
<feature type="transmembrane region" description="Helical" evidence="1">
    <location>
        <begin position="29"/>
        <end position="49"/>
    </location>
</feature>
<feature type="transmembrane region" description="Helical" evidence="1">
    <location>
        <begin position="55"/>
        <end position="75"/>
    </location>
</feature>
<feature type="transmembrane region" description="Helical" evidence="1">
    <location>
        <begin position="87"/>
        <end position="107"/>
    </location>
</feature>
<feature type="transmembrane region" description="Helical" evidence="1">
    <location>
        <begin position="111"/>
        <end position="131"/>
    </location>
</feature>
<feature type="transmembrane region" description="Helical" evidence="1">
    <location>
        <begin position="152"/>
        <end position="172"/>
    </location>
</feature>
<feature type="transmembrane region" description="Helical" evidence="1">
    <location>
        <begin position="177"/>
        <end position="197"/>
    </location>
</feature>
<feature type="transmembrane region" description="Helical" evidence="1">
    <location>
        <begin position="207"/>
        <end position="227"/>
    </location>
</feature>
<feature type="transmembrane region" description="Helical" evidence="1">
    <location>
        <begin position="230"/>
        <end position="250"/>
    </location>
</feature>
<feature type="transmembrane region" description="Helical" evidence="1">
    <location>
        <begin position="262"/>
        <end position="282"/>
    </location>
</feature>
<feature type="transmembrane region" description="Helical" evidence="1">
    <location>
        <begin position="284"/>
        <end position="304"/>
    </location>
</feature>
<feature type="transmembrane region" description="Helical" evidence="1">
    <location>
        <begin position="324"/>
        <end position="344"/>
    </location>
</feature>
<feature type="transmembrane region" description="Helical" evidence="1">
    <location>
        <begin position="356"/>
        <end position="376"/>
    </location>
</feature>
<feature type="domain" description="RCK N-terminal" evidence="2">
    <location>
        <begin position="400"/>
        <end position="519"/>
    </location>
</feature>
<organism>
    <name type="scientific">Salmonella paratyphi A (strain AKU_12601)</name>
    <dbReference type="NCBI Taxonomy" id="554290"/>
    <lineage>
        <taxon>Bacteria</taxon>
        <taxon>Pseudomonadati</taxon>
        <taxon>Pseudomonadota</taxon>
        <taxon>Gammaproteobacteria</taxon>
        <taxon>Enterobacterales</taxon>
        <taxon>Enterobacteriaceae</taxon>
        <taxon>Salmonella</taxon>
    </lineage>
</organism>
<dbReference type="EMBL" id="FM200053">
    <property type="protein sequence ID" value="CAR61353.1"/>
    <property type="molecule type" value="Genomic_DNA"/>
</dbReference>
<dbReference type="RefSeq" id="WP_000398134.1">
    <property type="nucleotide sequence ID" value="NC_011147.1"/>
</dbReference>
<dbReference type="SMR" id="B5BH03"/>
<dbReference type="KEGG" id="sek:SSPA3102"/>
<dbReference type="HOGENOM" id="CLU_005126_9_3_6"/>
<dbReference type="Proteomes" id="UP000001869">
    <property type="component" value="Chromosome"/>
</dbReference>
<dbReference type="GO" id="GO:0005886">
    <property type="term" value="C:plasma membrane"/>
    <property type="evidence" value="ECO:0007669"/>
    <property type="project" value="UniProtKB-SubCell"/>
</dbReference>
<dbReference type="GO" id="GO:0015503">
    <property type="term" value="F:glutathione-regulated potassium exporter activity"/>
    <property type="evidence" value="ECO:0007669"/>
    <property type="project" value="UniProtKB-UniRule"/>
</dbReference>
<dbReference type="GO" id="GO:1902600">
    <property type="term" value="P:proton transmembrane transport"/>
    <property type="evidence" value="ECO:0007669"/>
    <property type="project" value="InterPro"/>
</dbReference>
<dbReference type="FunFam" id="1.20.1530.20:FF:000001">
    <property type="entry name" value="Glutathione-regulated potassium-efflux system protein KefB"/>
    <property type="match status" value="1"/>
</dbReference>
<dbReference type="FunFam" id="3.40.50.720:FF:000036">
    <property type="entry name" value="Glutathione-regulated potassium-efflux system protein KefB"/>
    <property type="match status" value="1"/>
</dbReference>
<dbReference type="Gene3D" id="1.20.1530.20">
    <property type="match status" value="1"/>
</dbReference>
<dbReference type="Gene3D" id="3.40.50.720">
    <property type="entry name" value="NAD(P)-binding Rossmann-like Domain"/>
    <property type="match status" value="1"/>
</dbReference>
<dbReference type="HAMAP" id="MF_01412">
    <property type="entry name" value="K_H_efflux_KefB"/>
    <property type="match status" value="1"/>
</dbReference>
<dbReference type="InterPro" id="IPR006153">
    <property type="entry name" value="Cation/H_exchanger_TM"/>
</dbReference>
<dbReference type="InterPro" id="IPR004771">
    <property type="entry name" value="K/H_exchanger"/>
</dbReference>
<dbReference type="InterPro" id="IPR020884">
    <property type="entry name" value="K_H_efflux_KefB"/>
</dbReference>
<dbReference type="InterPro" id="IPR006036">
    <property type="entry name" value="K_uptake_TrkA"/>
</dbReference>
<dbReference type="InterPro" id="IPR038770">
    <property type="entry name" value="Na+/solute_symporter_sf"/>
</dbReference>
<dbReference type="InterPro" id="IPR036291">
    <property type="entry name" value="NAD(P)-bd_dom_sf"/>
</dbReference>
<dbReference type="InterPro" id="IPR003148">
    <property type="entry name" value="RCK_N"/>
</dbReference>
<dbReference type="NCBIfam" id="TIGR00932">
    <property type="entry name" value="2a37"/>
    <property type="match status" value="1"/>
</dbReference>
<dbReference type="NCBIfam" id="NF002973">
    <property type="entry name" value="PRK03659.1"/>
    <property type="match status" value="1"/>
</dbReference>
<dbReference type="PANTHER" id="PTHR46157">
    <property type="entry name" value="K(+) EFFLUX ANTIPORTER 3, CHLOROPLASTIC"/>
    <property type="match status" value="1"/>
</dbReference>
<dbReference type="PANTHER" id="PTHR46157:SF4">
    <property type="entry name" value="K(+) EFFLUX ANTIPORTER 3, CHLOROPLASTIC"/>
    <property type="match status" value="1"/>
</dbReference>
<dbReference type="Pfam" id="PF00999">
    <property type="entry name" value="Na_H_Exchanger"/>
    <property type="match status" value="1"/>
</dbReference>
<dbReference type="Pfam" id="PF02254">
    <property type="entry name" value="TrkA_N"/>
    <property type="match status" value="1"/>
</dbReference>
<dbReference type="PRINTS" id="PR00335">
    <property type="entry name" value="KUPTAKETRKA"/>
</dbReference>
<dbReference type="SUPFAM" id="SSF51735">
    <property type="entry name" value="NAD(P)-binding Rossmann-fold domains"/>
    <property type="match status" value="1"/>
</dbReference>
<dbReference type="PROSITE" id="PS51201">
    <property type="entry name" value="RCK_N"/>
    <property type="match status" value="1"/>
</dbReference>
<proteinExistence type="inferred from homology"/>
<sequence length="601" mass="66330">MEGADLLTAGVLFLFAAVAAVPLAARLGIGAVLGYLLAGIAIGPWGLGFISDVDEILHFSELGVVFLMFIIGLELNPSRLWQLRRSIFGVGAAQVLLSAAVLAGLLMLADFLWQAAVVGGIGLAMSSTAMALQLMREKGMNRSESGQLGFSVLLFQDLAVIPALALVPLLAGSADEHFDWFKVAMKVLAFAVMLIGGRYLLRPVFRFIAASGVREVFTAATLLLVLSAALFMDALGLSMALGTFIAGVLLAESEYRHELENAIDPFKGLLLGLFFISVGMSLNLGVLYTHLLWVAASVVILVVIKMLTLYLLARLYGIRSSERMQFASVLSQGGEFAFVLFSTASSQRLFQGDQMALLLVTVTLSMMTTPLLMKGIDKWLSRRLNGPEENDEKPWVEDDKPQVIVVGFGRFGQVIARLLMANKMRITVLERDIGAVNLMRKYGYKVYYGDATQVELLRSAGAEAAESIVITCNEPEDTMKLVALCQQHFPHLHILARARGRVEAHELLQAGVTQFSRETFSSALELGRKTLVSLGMHPHQAQRAQLHFRRLDMRMLRGLIPEHSDMVQISRAREARRELEEIFQREMQQERRQLDGWDEFE</sequence>